<evidence type="ECO:0000250" key="1">
    <source>
        <dbReference type="UniProtKB" id="A7X657"/>
    </source>
</evidence>
<evidence type="ECO:0000250" key="2">
    <source>
        <dbReference type="UniProtKB" id="Q13572"/>
    </source>
</evidence>
<evidence type="ECO:0000250" key="3">
    <source>
        <dbReference type="UniProtKB" id="Q84Y01"/>
    </source>
</evidence>
<evidence type="ECO:0000250" key="4">
    <source>
        <dbReference type="UniProtKB" id="Q9XYQ1"/>
    </source>
</evidence>
<evidence type="ECO:0000255" key="5">
    <source>
        <dbReference type="PROSITE-ProRule" id="PRU00409"/>
    </source>
</evidence>
<evidence type="ECO:0000256" key="6">
    <source>
        <dbReference type="SAM" id="MobiDB-lite"/>
    </source>
</evidence>
<evidence type="ECO:0000269" key="7">
    <source>
    </source>
</evidence>
<evidence type="ECO:0000303" key="8">
    <source>
    </source>
</evidence>
<evidence type="ECO:0000305" key="9"/>
<evidence type="ECO:0000312" key="10">
    <source>
        <dbReference type="EMBL" id="KRH35630.1"/>
    </source>
</evidence>
<protein>
    <recommendedName>
        <fullName evidence="8">Inositol-tetrakisphosphate 1-kinase 4</fullName>
        <shortName evidence="8">GmItpk4</shortName>
        <ecNumber evidence="7">2.7.1.134</ecNumber>
    </recommendedName>
    <alternativeName>
        <fullName evidence="3">Inositol 1,3,4-trisphosphate 5/6-kinase 4</fullName>
        <shortName evidence="3">Inositol-triphosphate 5/6-kinase 4</shortName>
        <shortName evidence="3">Ins(1,3,4)P(3) 5/6-kinase 4</shortName>
        <ecNumber evidence="7">2.7.1.159</ecNumber>
    </alternativeName>
</protein>
<organism>
    <name type="scientific">Glycine max</name>
    <name type="common">Soybean</name>
    <name type="synonym">Glycine hispida</name>
    <dbReference type="NCBI Taxonomy" id="3847"/>
    <lineage>
        <taxon>Eukaryota</taxon>
        <taxon>Viridiplantae</taxon>
        <taxon>Streptophyta</taxon>
        <taxon>Embryophyta</taxon>
        <taxon>Tracheophyta</taxon>
        <taxon>Spermatophyta</taxon>
        <taxon>Magnoliopsida</taxon>
        <taxon>eudicotyledons</taxon>
        <taxon>Gunneridae</taxon>
        <taxon>Pentapetalae</taxon>
        <taxon>rosids</taxon>
        <taxon>fabids</taxon>
        <taxon>Fabales</taxon>
        <taxon>Fabaceae</taxon>
        <taxon>Papilionoideae</taxon>
        <taxon>50 kb inversion clade</taxon>
        <taxon>NPAAA clade</taxon>
        <taxon>indigoferoid/millettioid clade</taxon>
        <taxon>Phaseoleae</taxon>
        <taxon>Glycine</taxon>
        <taxon>Glycine subgen. Soja</taxon>
    </lineage>
</organism>
<name>ITPK4_SOYBN</name>
<accession>A7X680</accession>
<reference key="1">
    <citation type="journal article" date="2008" name="FEBS Lett.">
        <title>Metabolic and signaling properties of an Itpk gene family in Glycine max.</title>
        <authorList>
            <person name="Stiles A.R."/>
            <person name="Qian X."/>
            <person name="Shears S.B."/>
            <person name="Grabau E.A."/>
        </authorList>
    </citation>
    <scope>NUCLEOTIDE SEQUENCE [MRNA]</scope>
    <scope>FUNCTION</scope>
    <scope>CATALYTIC ACTIVITY</scope>
    <scope>BIOPHYSICOCHEMICAL PROPERTIES</scope>
    <scope>TISSUE SPECIFICITY</scope>
</reference>
<reference key="2">
    <citation type="journal article" date="2010" name="Nature">
        <title>Genome sequence of the palaeopolyploid soybean.</title>
        <authorList>
            <person name="Schmutz J."/>
            <person name="Cannon S.B."/>
            <person name="Schlueter J."/>
            <person name="Ma J."/>
            <person name="Mitros T."/>
            <person name="Nelson W."/>
            <person name="Hyten D.L."/>
            <person name="Song Q."/>
            <person name="Thelen J.J."/>
            <person name="Cheng J."/>
            <person name="Xu D."/>
            <person name="Hellsten U."/>
            <person name="May G.D."/>
            <person name="Yu Y."/>
            <person name="Sakurai T."/>
            <person name="Umezawa T."/>
            <person name="Bhattacharyya M.K."/>
            <person name="Sandhu D."/>
            <person name="Valliyodan B."/>
            <person name="Lindquist E."/>
            <person name="Peto M."/>
            <person name="Grant D."/>
            <person name="Shu S."/>
            <person name="Goodstein D."/>
            <person name="Barry K."/>
            <person name="Futrell-Griggs M."/>
            <person name="Abernathy B."/>
            <person name="Du J."/>
            <person name="Tian Z."/>
            <person name="Zhu L."/>
            <person name="Gill N."/>
            <person name="Joshi T."/>
            <person name="Libault M."/>
            <person name="Sethuraman A."/>
            <person name="Zhang X.-C."/>
            <person name="Shinozaki K."/>
            <person name="Nguyen H.T."/>
            <person name="Wing R.A."/>
            <person name="Cregan P."/>
            <person name="Specht J."/>
            <person name="Grimwood J."/>
            <person name="Rokhsar D."/>
            <person name="Stacey G."/>
            <person name="Shoemaker R.C."/>
            <person name="Jackson S.A."/>
        </authorList>
    </citation>
    <scope>NUCLEOTIDE SEQUENCE [LARGE SCALE GENOMIC DNA]</scope>
    <source>
        <strain>cv. Williams 82</strain>
        <tissue>Callus</tissue>
    </source>
</reference>
<dbReference type="EC" id="2.7.1.134" evidence="7"/>
<dbReference type="EC" id="2.7.1.159" evidence="7"/>
<dbReference type="EMBL" id="EU033961">
    <property type="protein sequence ID" value="ABU93834.1"/>
    <property type="molecule type" value="mRNA"/>
</dbReference>
<dbReference type="EMBL" id="CM000843">
    <property type="protein sequence ID" value="KRH35630.1"/>
    <property type="molecule type" value="Genomic_DNA"/>
</dbReference>
<dbReference type="RefSeq" id="NP_001237500.1">
    <property type="nucleotide sequence ID" value="NM_001250571.1"/>
</dbReference>
<dbReference type="SMR" id="A7X680"/>
<dbReference type="STRING" id="3847.A7X680"/>
<dbReference type="PaxDb" id="3847-GLYMA10G40100.1"/>
<dbReference type="PRIDE" id="A7X680"/>
<dbReference type="EnsemblPlants" id="KRH35630">
    <property type="protein sequence ID" value="KRH35630"/>
    <property type="gene ID" value="GLYMA_10G255000"/>
</dbReference>
<dbReference type="GeneID" id="100127410"/>
<dbReference type="Gramene" id="KRH35630">
    <property type="protein sequence ID" value="KRH35630"/>
    <property type="gene ID" value="GLYMA_10G255000"/>
</dbReference>
<dbReference type="KEGG" id="gmx:100127410"/>
<dbReference type="eggNOG" id="ENOG502QQS1">
    <property type="taxonomic scope" value="Eukaryota"/>
</dbReference>
<dbReference type="HOGENOM" id="CLU_041857_0_0_1"/>
<dbReference type="InParanoid" id="A7X680"/>
<dbReference type="OMA" id="MKPREED"/>
<dbReference type="OrthoDB" id="25308at2759"/>
<dbReference type="Proteomes" id="UP000008827">
    <property type="component" value="Chromosome 10"/>
</dbReference>
<dbReference type="ExpressionAtlas" id="A7X680">
    <property type="expression patterns" value="baseline and differential"/>
</dbReference>
<dbReference type="GO" id="GO:0005524">
    <property type="term" value="F:ATP binding"/>
    <property type="evidence" value="ECO:0007669"/>
    <property type="project" value="UniProtKB-KW"/>
</dbReference>
<dbReference type="GO" id="GO:0052726">
    <property type="term" value="F:inositol-1,3,4-trisphosphate 5-kinase activity"/>
    <property type="evidence" value="ECO:0000314"/>
    <property type="project" value="UniProtKB"/>
</dbReference>
<dbReference type="GO" id="GO:0052725">
    <property type="term" value="F:inositol-1,3,4-trisphosphate 6-kinase activity"/>
    <property type="evidence" value="ECO:0000314"/>
    <property type="project" value="UniProtKB"/>
</dbReference>
<dbReference type="GO" id="GO:0047325">
    <property type="term" value="F:inositol-3,4,5,6-tetrakisphosphate 1-kinase activity"/>
    <property type="evidence" value="ECO:0000314"/>
    <property type="project" value="UniProtKB"/>
</dbReference>
<dbReference type="GO" id="GO:0052835">
    <property type="term" value="F:inositol-3,4,6-trisphosphate 1-kinase activity"/>
    <property type="evidence" value="ECO:0000314"/>
    <property type="project" value="UniProtKB"/>
</dbReference>
<dbReference type="GO" id="GO:0000287">
    <property type="term" value="F:magnesium ion binding"/>
    <property type="evidence" value="ECO:0007669"/>
    <property type="project" value="InterPro"/>
</dbReference>
<dbReference type="GO" id="GO:0032957">
    <property type="term" value="P:inositol trisphosphate metabolic process"/>
    <property type="evidence" value="ECO:0007669"/>
    <property type="project" value="InterPro"/>
</dbReference>
<dbReference type="FunFam" id="3.30.1490.220:FF:000002">
    <property type="entry name" value="Inositol-tetrakisphosphate 1-kinase"/>
    <property type="match status" value="1"/>
</dbReference>
<dbReference type="FunFam" id="3.40.50.11370:FF:000002">
    <property type="entry name" value="Inositol-tetrakisphosphate 1-kinase"/>
    <property type="match status" value="1"/>
</dbReference>
<dbReference type="Gene3D" id="3.30.1490.220">
    <property type="match status" value="1"/>
</dbReference>
<dbReference type="Gene3D" id="3.40.50.11370">
    <property type="match status" value="1"/>
</dbReference>
<dbReference type="InterPro" id="IPR008656">
    <property type="entry name" value="Inositol_tetrakis-P_1-kinase"/>
</dbReference>
<dbReference type="InterPro" id="IPR040464">
    <property type="entry name" value="InsP(3)kin_ATP-grasp"/>
</dbReference>
<dbReference type="InterPro" id="IPR041429">
    <property type="entry name" value="ITPK1_N"/>
</dbReference>
<dbReference type="PANTHER" id="PTHR14217">
    <property type="entry name" value="INOSITOL-TETRAKISPHOSPHATE 1-KINASE"/>
    <property type="match status" value="1"/>
</dbReference>
<dbReference type="PANTHER" id="PTHR14217:SF19">
    <property type="entry name" value="INOSITOL-TETRAKISPHOSPHATE 1-KINASE 2"/>
    <property type="match status" value="1"/>
</dbReference>
<dbReference type="Pfam" id="PF05770">
    <property type="entry name" value="Ins134_P3_kin"/>
    <property type="match status" value="1"/>
</dbReference>
<dbReference type="Pfam" id="PF17927">
    <property type="entry name" value="Ins134_P3_kin_N"/>
    <property type="match status" value="1"/>
</dbReference>
<dbReference type="PIRSF" id="PIRSF038186">
    <property type="entry name" value="ITPK"/>
    <property type="match status" value="1"/>
</dbReference>
<dbReference type="SUPFAM" id="SSF56059">
    <property type="entry name" value="Glutathione synthetase ATP-binding domain-like"/>
    <property type="match status" value="1"/>
</dbReference>
<comment type="function">
    <text evidence="7">Kinase that can phosphorylate various inositol polyphosphate such as Ins(3,4,5,6)P4, Ins(3,4,6)P3 and Ins(1,3,4)P3 (PubMed:18474240). May participate in an inositol lipid-independent pathway of InsP6 synthesis (PubMed:18474240).</text>
</comment>
<comment type="catalytic activity">
    <reaction evidence="7">
        <text>1D-myo-inositol 1,3,4-trisphosphate + ATP = 1D-myo-inositol 1,3,4,5-tetrakisphosphate + ADP + H(+)</text>
        <dbReference type="Rhea" id="RHEA:13253"/>
        <dbReference type="ChEBI" id="CHEBI:15378"/>
        <dbReference type="ChEBI" id="CHEBI:30616"/>
        <dbReference type="ChEBI" id="CHEBI:57895"/>
        <dbReference type="ChEBI" id="CHEBI:58414"/>
        <dbReference type="ChEBI" id="CHEBI:456216"/>
        <dbReference type="EC" id="2.7.1.159"/>
    </reaction>
    <physiologicalReaction direction="left-to-right" evidence="7">
        <dbReference type="Rhea" id="RHEA:13254"/>
    </physiologicalReaction>
</comment>
<comment type="catalytic activity">
    <reaction evidence="7">
        <text>1D-myo-inositol 1,3,4-trisphosphate + ATP = 1D-myo-inositol 1,3,4,6-tetrakisphosphate + ADP + H(+)</text>
        <dbReference type="Rhea" id="RHEA:20940"/>
        <dbReference type="ChEBI" id="CHEBI:15378"/>
        <dbReference type="ChEBI" id="CHEBI:30616"/>
        <dbReference type="ChEBI" id="CHEBI:57660"/>
        <dbReference type="ChEBI" id="CHEBI:58414"/>
        <dbReference type="ChEBI" id="CHEBI:456216"/>
        <dbReference type="EC" id="2.7.1.159"/>
    </reaction>
    <physiologicalReaction direction="left-to-right" evidence="7">
        <dbReference type="Rhea" id="RHEA:20941"/>
    </physiologicalReaction>
</comment>
<comment type="catalytic activity">
    <reaction evidence="7">
        <text>1D-myo-inositol 3,4,5,6-tetrakisphosphate + ATP = 1D-myo-inositol 1,3,4,5,6-pentakisphosphate + ADP + H(+)</text>
        <dbReference type="Rhea" id="RHEA:12452"/>
        <dbReference type="ChEBI" id="CHEBI:15378"/>
        <dbReference type="ChEBI" id="CHEBI:30616"/>
        <dbReference type="ChEBI" id="CHEBI:57539"/>
        <dbReference type="ChEBI" id="CHEBI:57733"/>
        <dbReference type="ChEBI" id="CHEBI:456216"/>
        <dbReference type="EC" id="2.7.1.134"/>
    </reaction>
    <physiologicalReaction direction="left-to-right" evidence="7">
        <dbReference type="Rhea" id="RHEA:12453"/>
    </physiologicalReaction>
    <physiologicalReaction direction="right-to-left" evidence="3">
        <dbReference type="Rhea" id="RHEA:12454"/>
    </physiologicalReaction>
</comment>
<comment type="catalytic activity">
    <reaction evidence="7">
        <text>1D-myo-inositol 3,4,6-trisphosphate + ATP = 1D-myo-inositol 1,3,4,6-tetrakisphosphate + ADP + H(+)</text>
        <dbReference type="Rhea" id="RHEA:70287"/>
        <dbReference type="ChEBI" id="CHEBI:15378"/>
        <dbReference type="ChEBI" id="CHEBI:30616"/>
        <dbReference type="ChEBI" id="CHEBI:57660"/>
        <dbReference type="ChEBI" id="CHEBI:189099"/>
        <dbReference type="ChEBI" id="CHEBI:456216"/>
    </reaction>
    <physiologicalReaction direction="left-to-right" evidence="7">
        <dbReference type="Rhea" id="RHEA:70288"/>
    </physiologicalReaction>
</comment>
<comment type="cofactor">
    <cofactor evidence="2">
        <name>Mg(2+)</name>
        <dbReference type="ChEBI" id="CHEBI:18420"/>
    </cofactor>
    <text evidence="2">Binds 2 magnesium ions per subunit.</text>
</comment>
<comment type="biophysicochemical properties">
    <kinetics>
        <KM evidence="7">4.4 uM for Ins(1,3,4)P3</KM>
        <KM evidence="7">0.7 uM for Ins(3,4,5,6)P4</KM>
        <Vmax evidence="7">0.007 umol/min/mg enzyme with Ins(1,3,4)P3 as substrate</Vmax>
        <Vmax evidence="7">0.004 umol/min/mg enzyme with Ins(3,4,5,6)P4 as substrate</Vmax>
    </kinetics>
</comment>
<comment type="subunit">
    <text evidence="2">Monomer.</text>
</comment>
<comment type="tissue specificity">
    <text evidence="7">Expressed in seeds.</text>
</comment>
<comment type="similarity">
    <text evidence="9">Belongs to the ITPK1 family.</text>
</comment>
<keyword id="KW-0067">ATP-binding</keyword>
<keyword id="KW-0418">Kinase</keyword>
<keyword id="KW-0460">Magnesium</keyword>
<keyword id="KW-0479">Metal-binding</keyword>
<keyword id="KW-0547">Nucleotide-binding</keyword>
<keyword id="KW-1185">Reference proteome</keyword>
<keyword id="KW-0808">Transferase</keyword>
<proteinExistence type="evidence at protein level"/>
<feature type="chain" id="PRO_0000457407" description="Inositol-tetrakisphosphate 1-kinase 4">
    <location>
        <begin position="1"/>
        <end position="341"/>
    </location>
</feature>
<feature type="domain" description="ATP-grasp" evidence="5">
    <location>
        <begin position="125"/>
        <end position="335"/>
    </location>
</feature>
<feature type="region of interest" description="Disordered" evidence="6">
    <location>
        <begin position="1"/>
        <end position="23"/>
    </location>
</feature>
<feature type="region of interest" description="Catalytic specificity elements (CSE)" evidence="1">
    <location>
        <begin position="233"/>
        <end position="259"/>
    </location>
</feature>
<feature type="binding site" evidence="4">
    <location>
        <position position="38"/>
    </location>
    <ligand>
        <name>1D-myo-inositol 6-phosphate</name>
        <dbReference type="ChEBI" id="CHEBI:64841"/>
    </ligand>
</feature>
<feature type="binding site" evidence="4">
    <location>
        <position position="80"/>
    </location>
    <ligand>
        <name>1D-myo-inositol 6-phosphate</name>
        <dbReference type="ChEBI" id="CHEBI:64841"/>
    </ligand>
</feature>
<feature type="binding site" evidence="2">
    <location>
        <position position="115"/>
    </location>
    <ligand>
        <name>ATP</name>
        <dbReference type="ChEBI" id="CHEBI:30616"/>
    </ligand>
</feature>
<feature type="binding site" evidence="2">
    <location>
        <position position="167"/>
    </location>
    <ligand>
        <name>ATP</name>
        <dbReference type="ChEBI" id="CHEBI:30616"/>
    </ligand>
</feature>
<feature type="binding site" evidence="4">
    <location>
        <position position="173"/>
    </location>
    <ligand>
        <name>1D-myo-inositol 6-phosphate</name>
        <dbReference type="ChEBI" id="CHEBI:64841"/>
    </ligand>
</feature>
<feature type="binding site" evidence="4">
    <location>
        <position position="178"/>
    </location>
    <ligand>
        <name>1D-myo-inositol 6-phosphate</name>
        <dbReference type="ChEBI" id="CHEBI:64841"/>
    </ligand>
</feature>
<feature type="binding site" evidence="4">
    <location>
        <position position="178"/>
    </location>
    <ligand>
        <name>ATP</name>
        <dbReference type="ChEBI" id="CHEBI:30616"/>
    </ligand>
</feature>
<feature type="binding site" evidence="4">
    <location>
        <position position="199"/>
    </location>
    <ligand>
        <name>ATP</name>
        <dbReference type="ChEBI" id="CHEBI:30616"/>
    </ligand>
</feature>
<feature type="binding site" evidence="4">
    <location>
        <position position="202"/>
    </location>
    <ligand>
        <name>ATP</name>
        <dbReference type="ChEBI" id="CHEBI:30616"/>
    </ligand>
</feature>
<feature type="binding site" evidence="4">
    <location>
        <position position="210"/>
    </location>
    <ligand>
        <name>1D-myo-inositol 6-phosphate</name>
        <dbReference type="ChEBI" id="CHEBI:64841"/>
    </ligand>
</feature>
<feature type="binding site" evidence="3">
    <location>
        <position position="212"/>
    </location>
    <ligand>
        <name>1D-myo-inositol 6-phosphate</name>
        <dbReference type="ChEBI" id="CHEBI:64841"/>
    </ligand>
</feature>
<feature type="binding site" evidence="2">
    <location>
        <position position="225"/>
    </location>
    <ligand>
        <name>ATP</name>
        <dbReference type="ChEBI" id="CHEBI:30616"/>
    </ligand>
</feature>
<feature type="binding site" evidence="3">
    <location>
        <position position="288"/>
    </location>
    <ligand>
        <name>1D-myo-inositol 6-phosphate</name>
        <dbReference type="ChEBI" id="CHEBI:64841"/>
    </ligand>
</feature>
<feature type="binding site" evidence="2">
    <location>
        <position position="290"/>
    </location>
    <ligand>
        <name>Mg(2+)</name>
        <dbReference type="ChEBI" id="CHEBI:18420"/>
        <label>1</label>
    </ligand>
</feature>
<feature type="binding site" evidence="4">
    <location>
        <position position="304"/>
    </location>
    <ligand>
        <name>ATP</name>
        <dbReference type="ChEBI" id="CHEBI:30616"/>
    </ligand>
</feature>
<feature type="binding site" evidence="4">
    <location>
        <position position="305"/>
    </location>
    <ligand>
        <name>ATP</name>
        <dbReference type="ChEBI" id="CHEBI:30616"/>
    </ligand>
</feature>
<feature type="binding site" evidence="2">
    <location>
        <position position="305"/>
    </location>
    <ligand>
        <name>Mg(2+)</name>
        <dbReference type="ChEBI" id="CHEBI:18420"/>
        <label>1</label>
    </ligand>
</feature>
<feature type="binding site" evidence="2">
    <location>
        <position position="305"/>
    </location>
    <ligand>
        <name>Mg(2+)</name>
        <dbReference type="ChEBI" id="CHEBI:18420"/>
        <label>2</label>
    </ligand>
</feature>
<feature type="binding site" evidence="4">
    <location>
        <position position="307"/>
    </location>
    <ligand>
        <name>1D-myo-inositol 6-phosphate</name>
        <dbReference type="ChEBI" id="CHEBI:64841"/>
    </ligand>
</feature>
<feature type="binding site" evidence="4">
    <location>
        <position position="307"/>
    </location>
    <ligand>
        <name>ATP</name>
        <dbReference type="ChEBI" id="CHEBI:30616"/>
    </ligand>
</feature>
<feature type="binding site" evidence="2">
    <location>
        <position position="307"/>
    </location>
    <ligand>
        <name>Mg(2+)</name>
        <dbReference type="ChEBI" id="CHEBI:18420"/>
        <label>2</label>
    </ligand>
</feature>
<feature type="binding site" evidence="3">
    <location>
        <position position="311"/>
    </location>
    <ligand>
        <name>1D-myo-inositol 6-phosphate</name>
        <dbReference type="ChEBI" id="CHEBI:64841"/>
    </ligand>
</feature>
<feature type="binding site" evidence="3">
    <location>
        <position position="314"/>
    </location>
    <ligand>
        <name>1D-myo-inositol 6-phosphate</name>
        <dbReference type="ChEBI" id="CHEBI:64841"/>
    </ligand>
</feature>
<gene>
    <name evidence="8" type="primary">ITPK4</name>
    <name evidence="10" type="ORF">GLYMA_10G255000</name>
</gene>
<sequence length="341" mass="38364">MRLNGEISSGEEEEEEKQTGTTTFSSQKVVVGYALTSKKKKSFLQPSFTGLARNRGINFVAIDLNKPLPEQGPFDIILHKLSGEVWREIIEDYREKHPEVTVLDPPDAIQHLHNRQSMLQDVLDLNLSDCHGKVGVPRQLVITKEKDPSSIPYEVTKAGMKLPLVAKPLVVDGTAKSHELFLAYDEFSLSAVEPPLVLQEFVNHGGLLFKIYIVGETIKVVRRFSLPNISKRELSKVAGVFRFPRVSCAAASADDADLDPNIAEHPPRPLLERLARELRHRLGLHLFNIDMIREYGTKDVFYVIDINYFPGYGKMPGYEHVFTDFLLSLVESKCSNKKLAA</sequence>